<proteinExistence type="inferred from homology"/>
<organism>
    <name type="scientific">Trichormus variabilis (strain ATCC 29413 / PCC 7937)</name>
    <name type="common">Anabaena variabilis</name>
    <dbReference type="NCBI Taxonomy" id="240292"/>
    <lineage>
        <taxon>Bacteria</taxon>
        <taxon>Bacillati</taxon>
        <taxon>Cyanobacteriota</taxon>
        <taxon>Cyanophyceae</taxon>
        <taxon>Nostocales</taxon>
        <taxon>Nostocaceae</taxon>
        <taxon>Trichormus</taxon>
    </lineage>
</organism>
<protein>
    <recommendedName>
        <fullName evidence="1">Large ribosomal subunit protein bL9</fullName>
    </recommendedName>
    <alternativeName>
        <fullName evidence="2">50S ribosomal protein L9</fullName>
    </alternativeName>
</protein>
<feature type="chain" id="PRO_0000236469" description="Large ribosomal subunit protein bL9">
    <location>
        <begin position="1"/>
        <end position="152"/>
    </location>
</feature>
<gene>
    <name evidence="1" type="primary">rplI</name>
    <name evidence="1" type="synonym">rpl9</name>
    <name type="ordered locus">Ava_0329</name>
</gene>
<reference key="1">
    <citation type="journal article" date="2014" name="Stand. Genomic Sci.">
        <title>Complete genome sequence of Anabaena variabilis ATCC 29413.</title>
        <authorList>
            <person name="Thiel T."/>
            <person name="Pratte B.S."/>
            <person name="Zhong J."/>
            <person name="Goodwin L."/>
            <person name="Copeland A."/>
            <person name="Lucas S."/>
            <person name="Han C."/>
            <person name="Pitluck S."/>
            <person name="Land M.L."/>
            <person name="Kyrpides N.C."/>
            <person name="Woyke T."/>
        </authorList>
    </citation>
    <scope>NUCLEOTIDE SEQUENCE [LARGE SCALE GENOMIC DNA]</scope>
    <source>
        <strain>ATCC 29413 / PCC 7937</strain>
    </source>
</reference>
<accession>Q3MGD1</accession>
<dbReference type="EMBL" id="CP000117">
    <property type="protein sequence ID" value="ABA19955.1"/>
    <property type="molecule type" value="Genomic_DNA"/>
</dbReference>
<dbReference type="SMR" id="Q3MGD1"/>
<dbReference type="STRING" id="240292.Ava_0329"/>
<dbReference type="KEGG" id="ava:Ava_0329"/>
<dbReference type="eggNOG" id="COG0359">
    <property type="taxonomic scope" value="Bacteria"/>
</dbReference>
<dbReference type="HOGENOM" id="CLU_078938_5_1_3"/>
<dbReference type="Proteomes" id="UP000002533">
    <property type="component" value="Chromosome"/>
</dbReference>
<dbReference type="GO" id="GO:1990904">
    <property type="term" value="C:ribonucleoprotein complex"/>
    <property type="evidence" value="ECO:0007669"/>
    <property type="project" value="UniProtKB-KW"/>
</dbReference>
<dbReference type="GO" id="GO:0005840">
    <property type="term" value="C:ribosome"/>
    <property type="evidence" value="ECO:0007669"/>
    <property type="project" value="UniProtKB-KW"/>
</dbReference>
<dbReference type="GO" id="GO:0019843">
    <property type="term" value="F:rRNA binding"/>
    <property type="evidence" value="ECO:0007669"/>
    <property type="project" value="UniProtKB-UniRule"/>
</dbReference>
<dbReference type="GO" id="GO:0003735">
    <property type="term" value="F:structural constituent of ribosome"/>
    <property type="evidence" value="ECO:0007669"/>
    <property type="project" value="InterPro"/>
</dbReference>
<dbReference type="GO" id="GO:0006412">
    <property type="term" value="P:translation"/>
    <property type="evidence" value="ECO:0007669"/>
    <property type="project" value="UniProtKB-UniRule"/>
</dbReference>
<dbReference type="FunFam" id="3.40.5.10:FF:000003">
    <property type="entry name" value="50S ribosomal protein L9"/>
    <property type="match status" value="1"/>
</dbReference>
<dbReference type="Gene3D" id="3.10.430.100">
    <property type="entry name" value="Ribosomal protein L9, C-terminal domain"/>
    <property type="match status" value="1"/>
</dbReference>
<dbReference type="Gene3D" id="3.40.5.10">
    <property type="entry name" value="Ribosomal protein L9, N-terminal domain"/>
    <property type="match status" value="1"/>
</dbReference>
<dbReference type="HAMAP" id="MF_00503">
    <property type="entry name" value="Ribosomal_bL9"/>
    <property type="match status" value="1"/>
</dbReference>
<dbReference type="InterPro" id="IPR000244">
    <property type="entry name" value="Ribosomal_bL9"/>
</dbReference>
<dbReference type="InterPro" id="IPR009027">
    <property type="entry name" value="Ribosomal_bL9/RNase_H1_N"/>
</dbReference>
<dbReference type="InterPro" id="IPR020594">
    <property type="entry name" value="Ribosomal_bL9_bac/chp"/>
</dbReference>
<dbReference type="InterPro" id="IPR020069">
    <property type="entry name" value="Ribosomal_bL9_C"/>
</dbReference>
<dbReference type="InterPro" id="IPR036791">
    <property type="entry name" value="Ribosomal_bL9_C_sf"/>
</dbReference>
<dbReference type="InterPro" id="IPR020070">
    <property type="entry name" value="Ribosomal_bL9_N"/>
</dbReference>
<dbReference type="InterPro" id="IPR036935">
    <property type="entry name" value="Ribosomal_bL9_N_sf"/>
</dbReference>
<dbReference type="NCBIfam" id="TIGR00158">
    <property type="entry name" value="L9"/>
    <property type="match status" value="1"/>
</dbReference>
<dbReference type="PANTHER" id="PTHR21368">
    <property type="entry name" value="50S RIBOSOMAL PROTEIN L9"/>
    <property type="match status" value="1"/>
</dbReference>
<dbReference type="Pfam" id="PF03948">
    <property type="entry name" value="Ribosomal_L9_C"/>
    <property type="match status" value="1"/>
</dbReference>
<dbReference type="Pfam" id="PF01281">
    <property type="entry name" value="Ribosomal_L9_N"/>
    <property type="match status" value="1"/>
</dbReference>
<dbReference type="SUPFAM" id="SSF55658">
    <property type="entry name" value="L9 N-domain-like"/>
    <property type="match status" value="1"/>
</dbReference>
<dbReference type="SUPFAM" id="SSF55653">
    <property type="entry name" value="Ribosomal protein L9 C-domain"/>
    <property type="match status" value="1"/>
</dbReference>
<dbReference type="PROSITE" id="PS00651">
    <property type="entry name" value="RIBOSOMAL_L9"/>
    <property type="match status" value="1"/>
</dbReference>
<comment type="function">
    <text evidence="1">Binds to the 23S rRNA.</text>
</comment>
<comment type="similarity">
    <text evidence="1">Belongs to the bacterial ribosomal protein bL9 family.</text>
</comment>
<evidence type="ECO:0000255" key="1">
    <source>
        <dbReference type="HAMAP-Rule" id="MF_00503"/>
    </source>
</evidence>
<evidence type="ECO:0000305" key="2"/>
<sequence length="152" mass="16753">MVKRVQLVLTKDVSKLGRSGDLVDVAPGYARNYLIPQSLATHATPGILKQVERRREQERQRQLELRQQALEQKEALEKVGSLKIAKQVGENEAIFGTVTSQDVADAIQAATSQEVDRRGITIPDIGKLGTYKAEIKLFSDVTAQIDIEVVAS</sequence>
<name>RL9_TRIV2</name>
<keyword id="KW-0687">Ribonucleoprotein</keyword>
<keyword id="KW-0689">Ribosomal protein</keyword>
<keyword id="KW-0694">RNA-binding</keyword>
<keyword id="KW-0699">rRNA-binding</keyword>